<sequence length="87" mass="9647">MAMRFLNIGYGNIVSAHRIIAIVSPESAPIKRTVQEAREHNALLDATYGRKTRAVIVMDDGHVVLSPIQPETIAHRLNNKEDLSEEG</sequence>
<feature type="chain" id="PRO_1000198214" description="Putative regulatory protein BcerKBAB4_3695">
    <location>
        <begin position="1"/>
        <end position="87"/>
    </location>
</feature>
<accession>A9VTB0</accession>
<evidence type="ECO:0000255" key="1">
    <source>
        <dbReference type="HAMAP-Rule" id="MF_01503"/>
    </source>
</evidence>
<proteinExistence type="inferred from homology"/>
<name>Y3695_BACMK</name>
<organism>
    <name type="scientific">Bacillus mycoides (strain KBAB4)</name>
    <name type="common">Bacillus weihenstephanensis</name>
    <dbReference type="NCBI Taxonomy" id="315730"/>
    <lineage>
        <taxon>Bacteria</taxon>
        <taxon>Bacillati</taxon>
        <taxon>Bacillota</taxon>
        <taxon>Bacilli</taxon>
        <taxon>Bacillales</taxon>
        <taxon>Bacillaceae</taxon>
        <taxon>Bacillus</taxon>
        <taxon>Bacillus cereus group</taxon>
    </lineage>
</organism>
<gene>
    <name type="ordered locus">BcerKBAB4_3695</name>
</gene>
<reference key="1">
    <citation type="journal article" date="2008" name="Chem. Biol. Interact.">
        <title>Extending the Bacillus cereus group genomics to putative food-borne pathogens of different toxicity.</title>
        <authorList>
            <person name="Lapidus A."/>
            <person name="Goltsman E."/>
            <person name="Auger S."/>
            <person name="Galleron N."/>
            <person name="Segurens B."/>
            <person name="Dossat C."/>
            <person name="Land M.L."/>
            <person name="Broussolle V."/>
            <person name="Brillard J."/>
            <person name="Guinebretiere M.-H."/>
            <person name="Sanchis V."/>
            <person name="Nguen-the C."/>
            <person name="Lereclus D."/>
            <person name="Richardson P."/>
            <person name="Wincker P."/>
            <person name="Weissenbach J."/>
            <person name="Ehrlich S.D."/>
            <person name="Sorokin A."/>
        </authorList>
    </citation>
    <scope>NUCLEOTIDE SEQUENCE [LARGE SCALE GENOMIC DNA]</scope>
    <source>
        <strain>KBAB4</strain>
    </source>
</reference>
<dbReference type="EMBL" id="CP000903">
    <property type="protein sequence ID" value="ABY44866.1"/>
    <property type="molecule type" value="Genomic_DNA"/>
</dbReference>
<dbReference type="SMR" id="A9VTB0"/>
<dbReference type="KEGG" id="bwe:BcerKBAB4_3695"/>
<dbReference type="eggNOG" id="COG2052">
    <property type="taxonomic scope" value="Bacteria"/>
</dbReference>
<dbReference type="HOGENOM" id="CLU_165326_0_0_9"/>
<dbReference type="Proteomes" id="UP000002154">
    <property type="component" value="Chromosome"/>
</dbReference>
<dbReference type="HAMAP" id="MF_01503">
    <property type="entry name" value="RemA"/>
    <property type="match status" value="1"/>
</dbReference>
<dbReference type="InterPro" id="IPR007169">
    <property type="entry name" value="RemA-like"/>
</dbReference>
<dbReference type="NCBIfam" id="NF046064">
    <property type="entry name" value="MtxBflmRegRemA"/>
    <property type="match status" value="1"/>
</dbReference>
<dbReference type="NCBIfam" id="NF003315">
    <property type="entry name" value="PRK04323.1"/>
    <property type="match status" value="1"/>
</dbReference>
<dbReference type="PANTHER" id="PTHR38449:SF1">
    <property type="entry name" value="REGULATORY PROTEIN SSL2874-RELATED"/>
    <property type="match status" value="1"/>
</dbReference>
<dbReference type="PANTHER" id="PTHR38449">
    <property type="entry name" value="REGULATORY PROTEIN TM_1690-RELATED"/>
    <property type="match status" value="1"/>
</dbReference>
<dbReference type="Pfam" id="PF04025">
    <property type="entry name" value="RemA-like"/>
    <property type="match status" value="1"/>
</dbReference>
<protein>
    <recommendedName>
        <fullName evidence="1">Putative regulatory protein BcerKBAB4_3695</fullName>
    </recommendedName>
</protein>
<comment type="similarity">
    <text evidence="1">Belongs to the RemA family.</text>
</comment>